<protein>
    <recommendedName>
        <fullName evidence="1">ATP synthase subunit delta</fullName>
    </recommendedName>
    <alternativeName>
        <fullName evidence="1">ATP synthase F(1) sector subunit delta</fullName>
    </alternativeName>
    <alternativeName>
        <fullName evidence="1">F-type ATPase subunit delta</fullName>
        <shortName evidence="1">F-ATPase subunit delta</shortName>
    </alternativeName>
</protein>
<reference key="1">
    <citation type="journal article" date="2009" name="J. Bacteriol.">
        <title>The genome of Thermosipho africanus TCF52B: lateral genetic connections to the Firmicutes and Archaea.</title>
        <authorList>
            <person name="Nesboe C.L."/>
            <person name="Bapteste E."/>
            <person name="Curtis B."/>
            <person name="Dahle H."/>
            <person name="Lopez P."/>
            <person name="Macleod D."/>
            <person name="Dlutek M."/>
            <person name="Bowman S."/>
            <person name="Zhaxybayeva O."/>
            <person name="Birkeland N.-K."/>
            <person name="Doolittle W.F."/>
        </authorList>
    </citation>
    <scope>NUCLEOTIDE SEQUENCE [LARGE SCALE GENOMIC DNA]</scope>
    <source>
        <strain>TCF52B</strain>
    </source>
</reference>
<feature type="chain" id="PRO_0000382159" description="ATP synthase subunit delta">
    <location>
        <begin position="1"/>
        <end position="183"/>
    </location>
</feature>
<dbReference type="EMBL" id="CP001185">
    <property type="protein sequence ID" value="ACJ75055.1"/>
    <property type="molecule type" value="Genomic_DNA"/>
</dbReference>
<dbReference type="RefSeq" id="WP_012579653.1">
    <property type="nucleotide sequence ID" value="NC_011653.1"/>
</dbReference>
<dbReference type="SMR" id="B7IG41"/>
<dbReference type="STRING" id="484019.THA_568"/>
<dbReference type="KEGG" id="taf:THA_568"/>
<dbReference type="eggNOG" id="COG0712">
    <property type="taxonomic scope" value="Bacteria"/>
</dbReference>
<dbReference type="HOGENOM" id="CLU_085114_4_0_0"/>
<dbReference type="OrthoDB" id="9802471at2"/>
<dbReference type="Proteomes" id="UP000002453">
    <property type="component" value="Chromosome"/>
</dbReference>
<dbReference type="GO" id="GO:0005886">
    <property type="term" value="C:plasma membrane"/>
    <property type="evidence" value="ECO:0007669"/>
    <property type="project" value="UniProtKB-SubCell"/>
</dbReference>
<dbReference type="GO" id="GO:0045259">
    <property type="term" value="C:proton-transporting ATP synthase complex"/>
    <property type="evidence" value="ECO:0007669"/>
    <property type="project" value="UniProtKB-KW"/>
</dbReference>
<dbReference type="GO" id="GO:0046933">
    <property type="term" value="F:proton-transporting ATP synthase activity, rotational mechanism"/>
    <property type="evidence" value="ECO:0007669"/>
    <property type="project" value="UniProtKB-UniRule"/>
</dbReference>
<dbReference type="Gene3D" id="1.10.520.20">
    <property type="entry name" value="N-terminal domain of the delta subunit of the F1F0-ATP synthase"/>
    <property type="match status" value="1"/>
</dbReference>
<dbReference type="HAMAP" id="MF_01416">
    <property type="entry name" value="ATP_synth_delta_bact"/>
    <property type="match status" value="1"/>
</dbReference>
<dbReference type="InterPro" id="IPR026015">
    <property type="entry name" value="ATP_synth_OSCP/delta_N_sf"/>
</dbReference>
<dbReference type="InterPro" id="IPR000711">
    <property type="entry name" value="ATPase_OSCP/dsu"/>
</dbReference>
<dbReference type="NCBIfam" id="TIGR01145">
    <property type="entry name" value="ATP_synt_delta"/>
    <property type="match status" value="1"/>
</dbReference>
<dbReference type="NCBIfam" id="NF009976">
    <property type="entry name" value="PRK13441.1"/>
    <property type="match status" value="1"/>
</dbReference>
<dbReference type="PANTHER" id="PTHR11910">
    <property type="entry name" value="ATP SYNTHASE DELTA CHAIN"/>
    <property type="match status" value="1"/>
</dbReference>
<dbReference type="Pfam" id="PF00213">
    <property type="entry name" value="OSCP"/>
    <property type="match status" value="1"/>
</dbReference>
<dbReference type="PRINTS" id="PR00125">
    <property type="entry name" value="ATPASEDELTA"/>
</dbReference>
<dbReference type="SUPFAM" id="SSF47928">
    <property type="entry name" value="N-terminal domain of the delta subunit of the F1F0-ATP synthase"/>
    <property type="match status" value="1"/>
</dbReference>
<proteinExistence type="inferred from homology"/>
<sequence>MRYSVIASKYVKALLIVGQKLNKIEKYGEFLSFVKNIYESFATFFNNPIVKPEQKTLVIKQAFEEVFKESPGEAFLNFINIVFENKREKFIPQMQALYKYAAIDIENKILVNVKTAVKLSDQEIKVINDFVEKYVGKTPVIEETIDESLIAGAVIEFAGKMIDVSIKGRMDKIAKEVFFLRKG</sequence>
<keyword id="KW-0066">ATP synthesis</keyword>
<keyword id="KW-0997">Cell inner membrane</keyword>
<keyword id="KW-1003">Cell membrane</keyword>
<keyword id="KW-0139">CF(1)</keyword>
<keyword id="KW-0375">Hydrogen ion transport</keyword>
<keyword id="KW-0406">Ion transport</keyword>
<keyword id="KW-0472">Membrane</keyword>
<keyword id="KW-1185">Reference proteome</keyword>
<keyword id="KW-0813">Transport</keyword>
<organism>
    <name type="scientific">Thermosipho africanus (strain TCF52B)</name>
    <dbReference type="NCBI Taxonomy" id="484019"/>
    <lineage>
        <taxon>Bacteria</taxon>
        <taxon>Thermotogati</taxon>
        <taxon>Thermotogota</taxon>
        <taxon>Thermotogae</taxon>
        <taxon>Thermotogales</taxon>
        <taxon>Fervidobacteriaceae</taxon>
        <taxon>Thermosipho</taxon>
    </lineage>
</organism>
<accession>B7IG41</accession>
<comment type="function">
    <text evidence="1">F(1)F(0) ATP synthase produces ATP from ADP in the presence of a proton or sodium gradient. F-type ATPases consist of two structural domains, F(1) containing the extramembraneous catalytic core and F(0) containing the membrane proton channel, linked together by a central stalk and a peripheral stalk. During catalysis, ATP synthesis in the catalytic domain of F(1) is coupled via a rotary mechanism of the central stalk subunits to proton translocation.</text>
</comment>
<comment type="function">
    <text evidence="1">This protein is part of the stalk that links CF(0) to CF(1). It either transmits conformational changes from CF(0) to CF(1) or is implicated in proton conduction.</text>
</comment>
<comment type="subunit">
    <text evidence="1">F-type ATPases have 2 components, F(1) - the catalytic core - and F(0) - the membrane proton channel. F(1) has five subunits: alpha(3), beta(3), gamma(1), delta(1), epsilon(1). F(0) has three main subunits: a(1), b(2) and c(10-14). The alpha and beta chains form an alternating ring which encloses part of the gamma chain. F(1) is attached to F(0) by a central stalk formed by the gamma and epsilon chains, while a peripheral stalk is formed by the delta and b chains.</text>
</comment>
<comment type="subcellular location">
    <subcellularLocation>
        <location evidence="1">Cell inner membrane</location>
        <topology evidence="1">Peripheral membrane protein</topology>
    </subcellularLocation>
</comment>
<comment type="similarity">
    <text evidence="1">Belongs to the ATPase delta chain family.</text>
</comment>
<name>ATPD_THEAB</name>
<evidence type="ECO:0000255" key="1">
    <source>
        <dbReference type="HAMAP-Rule" id="MF_01416"/>
    </source>
</evidence>
<gene>
    <name evidence="1" type="primary">atpH</name>
    <name type="ordered locus">THA_568</name>
</gene>